<accession>Q5F7D8</accession>
<evidence type="ECO:0000255" key="1">
    <source>
        <dbReference type="HAMAP-Rule" id="MF_01024"/>
    </source>
</evidence>
<proteinExistence type="inferred from homology"/>
<sequence length="429" mass="46381">MKKLNTQSPDFQAGLKALLAFETAQNPETERIVADICADVQKRGDAALIEYTNKFDQTNAKSIDDLILTQADLNAAFERIPNDVQTALQTAARRVESYHQRQKMESWSYTDEDGTLLGQQITPLDRVGIYVPGGKAAYPSSVIMNAMPAHVAGVKEIIMVVPTPKGERNDIVLAAAYVAGVTKVFTVGGAQAIAALAYGTETIPQVDKITGPGNAFVAAAKRRVFGVVGIDMVAGPSEILVIADGTTPADWVAMDLFSQAEHDEIAQAILIGTSQAYLDEVEAAMDRLIETMPRRDIIEASLGNRGAMILVKDLNEACEISNYISPEHLELSVENPQEWAKKIRHAGAIFMGRYTGESLGDYCAGPNHVLPTSRTARFSSPLGTYDFQKRSSLIQVSEQGAQKLGETASVLAHGESLTAHARAAEFRMK</sequence>
<feature type="chain" id="PRO_0000135800" description="Histidinol dehydrogenase">
    <location>
        <begin position="1"/>
        <end position="429"/>
    </location>
</feature>
<feature type="active site" description="Proton acceptor" evidence="1">
    <location>
        <position position="327"/>
    </location>
</feature>
<feature type="active site" description="Proton acceptor" evidence="1">
    <location>
        <position position="328"/>
    </location>
</feature>
<feature type="binding site" evidence="1">
    <location>
        <position position="130"/>
    </location>
    <ligand>
        <name>NAD(+)</name>
        <dbReference type="ChEBI" id="CHEBI:57540"/>
    </ligand>
</feature>
<feature type="binding site" evidence="1">
    <location>
        <position position="191"/>
    </location>
    <ligand>
        <name>NAD(+)</name>
        <dbReference type="ChEBI" id="CHEBI:57540"/>
    </ligand>
</feature>
<feature type="binding site" evidence="1">
    <location>
        <position position="214"/>
    </location>
    <ligand>
        <name>NAD(+)</name>
        <dbReference type="ChEBI" id="CHEBI:57540"/>
    </ligand>
</feature>
<feature type="binding site" evidence="1">
    <location>
        <position position="237"/>
    </location>
    <ligand>
        <name>substrate</name>
    </ligand>
</feature>
<feature type="binding site" evidence="1">
    <location>
        <position position="259"/>
    </location>
    <ligand>
        <name>substrate</name>
    </ligand>
</feature>
<feature type="binding site" evidence="1">
    <location>
        <position position="259"/>
    </location>
    <ligand>
        <name>Zn(2+)</name>
        <dbReference type="ChEBI" id="CHEBI:29105"/>
    </ligand>
</feature>
<feature type="binding site" evidence="1">
    <location>
        <position position="262"/>
    </location>
    <ligand>
        <name>substrate</name>
    </ligand>
</feature>
<feature type="binding site" evidence="1">
    <location>
        <position position="262"/>
    </location>
    <ligand>
        <name>Zn(2+)</name>
        <dbReference type="ChEBI" id="CHEBI:29105"/>
    </ligand>
</feature>
<feature type="binding site" evidence="1">
    <location>
        <position position="328"/>
    </location>
    <ligand>
        <name>substrate</name>
    </ligand>
</feature>
<feature type="binding site" evidence="1">
    <location>
        <position position="361"/>
    </location>
    <ligand>
        <name>substrate</name>
    </ligand>
</feature>
<feature type="binding site" evidence="1">
    <location>
        <position position="361"/>
    </location>
    <ligand>
        <name>Zn(2+)</name>
        <dbReference type="ChEBI" id="CHEBI:29105"/>
    </ligand>
</feature>
<feature type="binding site" evidence="1">
    <location>
        <position position="415"/>
    </location>
    <ligand>
        <name>substrate</name>
    </ligand>
</feature>
<feature type="binding site" evidence="1">
    <location>
        <position position="420"/>
    </location>
    <ligand>
        <name>substrate</name>
    </ligand>
</feature>
<feature type="binding site" evidence="1">
    <location>
        <position position="420"/>
    </location>
    <ligand>
        <name>Zn(2+)</name>
        <dbReference type="ChEBI" id="CHEBI:29105"/>
    </ligand>
</feature>
<protein>
    <recommendedName>
        <fullName evidence="1">Histidinol dehydrogenase</fullName>
        <shortName evidence="1">HDH</shortName>
        <ecNumber evidence="1">1.1.1.23</ecNumber>
    </recommendedName>
</protein>
<dbReference type="EC" id="1.1.1.23" evidence="1"/>
<dbReference type="EMBL" id="AE004969">
    <property type="protein sequence ID" value="AAW89899.1"/>
    <property type="molecule type" value="Genomic_DNA"/>
</dbReference>
<dbReference type="RefSeq" id="WP_003689697.1">
    <property type="nucleotide sequence ID" value="NC_002946.2"/>
</dbReference>
<dbReference type="RefSeq" id="YP_208311.1">
    <property type="nucleotide sequence ID" value="NC_002946.2"/>
</dbReference>
<dbReference type="SMR" id="Q5F7D8"/>
<dbReference type="STRING" id="242231.NGO_1240"/>
<dbReference type="GeneID" id="66752479"/>
<dbReference type="KEGG" id="ngo:NGO_1240"/>
<dbReference type="PATRIC" id="fig|242231.10.peg.1459"/>
<dbReference type="HOGENOM" id="CLU_006732_3_3_4"/>
<dbReference type="UniPathway" id="UPA00031">
    <property type="reaction ID" value="UER00014"/>
</dbReference>
<dbReference type="Proteomes" id="UP000000535">
    <property type="component" value="Chromosome"/>
</dbReference>
<dbReference type="GO" id="GO:0005829">
    <property type="term" value="C:cytosol"/>
    <property type="evidence" value="ECO:0007669"/>
    <property type="project" value="TreeGrafter"/>
</dbReference>
<dbReference type="GO" id="GO:0004399">
    <property type="term" value="F:histidinol dehydrogenase activity"/>
    <property type="evidence" value="ECO:0007669"/>
    <property type="project" value="UniProtKB-UniRule"/>
</dbReference>
<dbReference type="GO" id="GO:0051287">
    <property type="term" value="F:NAD binding"/>
    <property type="evidence" value="ECO:0007669"/>
    <property type="project" value="InterPro"/>
</dbReference>
<dbReference type="GO" id="GO:0008270">
    <property type="term" value="F:zinc ion binding"/>
    <property type="evidence" value="ECO:0007669"/>
    <property type="project" value="UniProtKB-UniRule"/>
</dbReference>
<dbReference type="GO" id="GO:0000105">
    <property type="term" value="P:L-histidine biosynthetic process"/>
    <property type="evidence" value="ECO:0007669"/>
    <property type="project" value="UniProtKB-UniRule"/>
</dbReference>
<dbReference type="CDD" id="cd06572">
    <property type="entry name" value="Histidinol_dh"/>
    <property type="match status" value="1"/>
</dbReference>
<dbReference type="FunFam" id="3.40.50.1980:FF:000004">
    <property type="entry name" value="Histidinol dehydrogenase"/>
    <property type="match status" value="1"/>
</dbReference>
<dbReference type="FunFam" id="3.40.50.1980:FF:000010">
    <property type="entry name" value="Histidinol dehydrogenase"/>
    <property type="match status" value="1"/>
</dbReference>
<dbReference type="FunFam" id="1.20.5.1300:FF:000002">
    <property type="entry name" value="Histidinol dehydrogenase, chloroplastic"/>
    <property type="match status" value="1"/>
</dbReference>
<dbReference type="Gene3D" id="1.20.5.1300">
    <property type="match status" value="1"/>
</dbReference>
<dbReference type="Gene3D" id="3.40.50.1980">
    <property type="entry name" value="Nitrogenase molybdenum iron protein domain"/>
    <property type="match status" value="2"/>
</dbReference>
<dbReference type="HAMAP" id="MF_01024">
    <property type="entry name" value="HisD"/>
    <property type="match status" value="1"/>
</dbReference>
<dbReference type="InterPro" id="IPR016161">
    <property type="entry name" value="Ald_DH/histidinol_DH"/>
</dbReference>
<dbReference type="InterPro" id="IPR001692">
    <property type="entry name" value="Histidinol_DH_CS"/>
</dbReference>
<dbReference type="InterPro" id="IPR022695">
    <property type="entry name" value="Histidinol_DH_monofunct"/>
</dbReference>
<dbReference type="InterPro" id="IPR012131">
    <property type="entry name" value="Hstdl_DH"/>
</dbReference>
<dbReference type="NCBIfam" id="TIGR00069">
    <property type="entry name" value="hisD"/>
    <property type="match status" value="1"/>
</dbReference>
<dbReference type="PANTHER" id="PTHR21256:SF2">
    <property type="entry name" value="HISTIDINE BIOSYNTHESIS TRIFUNCTIONAL PROTEIN"/>
    <property type="match status" value="1"/>
</dbReference>
<dbReference type="PANTHER" id="PTHR21256">
    <property type="entry name" value="HISTIDINOL DEHYDROGENASE HDH"/>
    <property type="match status" value="1"/>
</dbReference>
<dbReference type="Pfam" id="PF00815">
    <property type="entry name" value="Histidinol_dh"/>
    <property type="match status" value="1"/>
</dbReference>
<dbReference type="PIRSF" id="PIRSF000099">
    <property type="entry name" value="Histidinol_dh"/>
    <property type="match status" value="1"/>
</dbReference>
<dbReference type="PRINTS" id="PR00083">
    <property type="entry name" value="HOLDHDRGNASE"/>
</dbReference>
<dbReference type="SUPFAM" id="SSF53720">
    <property type="entry name" value="ALDH-like"/>
    <property type="match status" value="1"/>
</dbReference>
<dbReference type="PROSITE" id="PS00611">
    <property type="entry name" value="HISOL_DEHYDROGENASE"/>
    <property type="match status" value="1"/>
</dbReference>
<comment type="function">
    <text evidence="1">Catalyzes the sequential NAD-dependent oxidations of L-histidinol to L-histidinaldehyde and then to L-histidine.</text>
</comment>
<comment type="catalytic activity">
    <reaction evidence="1">
        <text>L-histidinol + 2 NAD(+) + H2O = L-histidine + 2 NADH + 3 H(+)</text>
        <dbReference type="Rhea" id="RHEA:20641"/>
        <dbReference type="ChEBI" id="CHEBI:15377"/>
        <dbReference type="ChEBI" id="CHEBI:15378"/>
        <dbReference type="ChEBI" id="CHEBI:57540"/>
        <dbReference type="ChEBI" id="CHEBI:57595"/>
        <dbReference type="ChEBI" id="CHEBI:57699"/>
        <dbReference type="ChEBI" id="CHEBI:57945"/>
        <dbReference type="EC" id="1.1.1.23"/>
    </reaction>
</comment>
<comment type="cofactor">
    <cofactor evidence="1">
        <name>Zn(2+)</name>
        <dbReference type="ChEBI" id="CHEBI:29105"/>
    </cofactor>
    <text evidence="1">Binds 1 zinc ion per subunit.</text>
</comment>
<comment type="pathway">
    <text evidence="1">Amino-acid biosynthesis; L-histidine biosynthesis; L-histidine from 5-phospho-alpha-D-ribose 1-diphosphate: step 9/9.</text>
</comment>
<comment type="similarity">
    <text evidence="1">Belongs to the histidinol dehydrogenase family.</text>
</comment>
<name>HISX_NEIG1</name>
<gene>
    <name evidence="1" type="primary">hisD</name>
    <name type="ordered locus">NGO_1240</name>
</gene>
<organism>
    <name type="scientific">Neisseria gonorrhoeae (strain ATCC 700825 / FA 1090)</name>
    <dbReference type="NCBI Taxonomy" id="242231"/>
    <lineage>
        <taxon>Bacteria</taxon>
        <taxon>Pseudomonadati</taxon>
        <taxon>Pseudomonadota</taxon>
        <taxon>Betaproteobacteria</taxon>
        <taxon>Neisseriales</taxon>
        <taxon>Neisseriaceae</taxon>
        <taxon>Neisseria</taxon>
    </lineage>
</organism>
<keyword id="KW-0028">Amino-acid biosynthesis</keyword>
<keyword id="KW-0368">Histidine biosynthesis</keyword>
<keyword id="KW-0479">Metal-binding</keyword>
<keyword id="KW-0520">NAD</keyword>
<keyword id="KW-0560">Oxidoreductase</keyword>
<keyword id="KW-1185">Reference proteome</keyword>
<keyword id="KW-0862">Zinc</keyword>
<reference key="1">
    <citation type="submission" date="2003-03" db="EMBL/GenBank/DDBJ databases">
        <title>The complete genome sequence of Neisseria gonorrhoeae.</title>
        <authorList>
            <person name="Lewis L.A."/>
            <person name="Gillaspy A.F."/>
            <person name="McLaughlin R.E."/>
            <person name="Gipson M."/>
            <person name="Ducey T.F."/>
            <person name="Ownbey T."/>
            <person name="Hartman K."/>
            <person name="Nydick C."/>
            <person name="Carson M.B."/>
            <person name="Vaughn J."/>
            <person name="Thomson C."/>
            <person name="Song L."/>
            <person name="Lin S."/>
            <person name="Yuan X."/>
            <person name="Najar F."/>
            <person name="Zhan M."/>
            <person name="Ren Q."/>
            <person name="Zhu H."/>
            <person name="Qi S."/>
            <person name="Kenton S.M."/>
            <person name="Lai H."/>
            <person name="White J.D."/>
            <person name="Clifton S."/>
            <person name="Roe B.A."/>
            <person name="Dyer D.W."/>
        </authorList>
    </citation>
    <scope>NUCLEOTIDE SEQUENCE [LARGE SCALE GENOMIC DNA]</scope>
    <source>
        <strain>ATCC 700825 / FA 1090</strain>
    </source>
</reference>